<dbReference type="EMBL" id="AE008923">
    <property type="protein sequence ID" value="AAM37534.1"/>
    <property type="molecule type" value="Genomic_DNA"/>
</dbReference>
<dbReference type="RefSeq" id="WP_011051766.1">
    <property type="nucleotide sequence ID" value="NC_003919.1"/>
</dbReference>
<dbReference type="SMR" id="Q8PJ55"/>
<dbReference type="GeneID" id="66911776"/>
<dbReference type="KEGG" id="xac:XAC2687"/>
<dbReference type="eggNOG" id="COG0532">
    <property type="taxonomic scope" value="Bacteria"/>
</dbReference>
<dbReference type="HOGENOM" id="CLU_006301_6_3_6"/>
<dbReference type="Proteomes" id="UP000000576">
    <property type="component" value="Chromosome"/>
</dbReference>
<dbReference type="GO" id="GO:0005829">
    <property type="term" value="C:cytosol"/>
    <property type="evidence" value="ECO:0007669"/>
    <property type="project" value="TreeGrafter"/>
</dbReference>
<dbReference type="GO" id="GO:0005525">
    <property type="term" value="F:GTP binding"/>
    <property type="evidence" value="ECO:0007669"/>
    <property type="project" value="UniProtKB-KW"/>
</dbReference>
<dbReference type="GO" id="GO:0003924">
    <property type="term" value="F:GTPase activity"/>
    <property type="evidence" value="ECO:0007669"/>
    <property type="project" value="UniProtKB-UniRule"/>
</dbReference>
<dbReference type="GO" id="GO:0097216">
    <property type="term" value="F:guanosine tetraphosphate binding"/>
    <property type="evidence" value="ECO:0007669"/>
    <property type="project" value="UniProtKB-ARBA"/>
</dbReference>
<dbReference type="GO" id="GO:0003743">
    <property type="term" value="F:translation initiation factor activity"/>
    <property type="evidence" value="ECO:0007669"/>
    <property type="project" value="UniProtKB-UniRule"/>
</dbReference>
<dbReference type="CDD" id="cd01887">
    <property type="entry name" value="IF2_eIF5B"/>
    <property type="match status" value="1"/>
</dbReference>
<dbReference type="CDD" id="cd03702">
    <property type="entry name" value="IF2_mtIF2_II"/>
    <property type="match status" value="1"/>
</dbReference>
<dbReference type="CDD" id="cd03692">
    <property type="entry name" value="mtIF2_IVc"/>
    <property type="match status" value="1"/>
</dbReference>
<dbReference type="FunFam" id="2.40.30.10:FF:000008">
    <property type="entry name" value="Translation initiation factor IF-2"/>
    <property type="match status" value="1"/>
</dbReference>
<dbReference type="FunFam" id="2.40.30.10:FF:000054">
    <property type="entry name" value="Translation initiation factor IF-2"/>
    <property type="match status" value="1"/>
</dbReference>
<dbReference type="FunFam" id="3.40.50.10050:FF:000001">
    <property type="entry name" value="Translation initiation factor IF-2"/>
    <property type="match status" value="1"/>
</dbReference>
<dbReference type="FunFam" id="3.40.50.300:FF:000019">
    <property type="entry name" value="Translation initiation factor IF-2"/>
    <property type="match status" value="1"/>
</dbReference>
<dbReference type="Gene3D" id="3.40.50.300">
    <property type="entry name" value="P-loop containing nucleotide triphosphate hydrolases"/>
    <property type="match status" value="1"/>
</dbReference>
<dbReference type="Gene3D" id="3.30.56.50">
    <property type="entry name" value="Putative DNA-binding domain, N-terminal subdomain of bacterial translation initiation factor IF2"/>
    <property type="match status" value="1"/>
</dbReference>
<dbReference type="Gene3D" id="2.40.30.10">
    <property type="entry name" value="Translation factors"/>
    <property type="match status" value="2"/>
</dbReference>
<dbReference type="Gene3D" id="3.40.50.10050">
    <property type="entry name" value="Translation initiation factor IF- 2, domain 3"/>
    <property type="match status" value="1"/>
</dbReference>
<dbReference type="HAMAP" id="MF_00100_B">
    <property type="entry name" value="IF_2_B"/>
    <property type="match status" value="1"/>
</dbReference>
<dbReference type="InterPro" id="IPR009061">
    <property type="entry name" value="DNA-bd_dom_put_sf"/>
</dbReference>
<dbReference type="InterPro" id="IPR053905">
    <property type="entry name" value="EF-G-like_DII"/>
</dbReference>
<dbReference type="InterPro" id="IPR004161">
    <property type="entry name" value="EFTu-like_2"/>
</dbReference>
<dbReference type="InterPro" id="IPR013575">
    <property type="entry name" value="IF2_assoc_dom_bac"/>
</dbReference>
<dbReference type="InterPro" id="IPR044145">
    <property type="entry name" value="IF2_II"/>
</dbReference>
<dbReference type="InterPro" id="IPR006847">
    <property type="entry name" value="IF2_N"/>
</dbReference>
<dbReference type="InterPro" id="IPR027417">
    <property type="entry name" value="P-loop_NTPase"/>
</dbReference>
<dbReference type="InterPro" id="IPR005225">
    <property type="entry name" value="Small_GTP-bd"/>
</dbReference>
<dbReference type="InterPro" id="IPR000795">
    <property type="entry name" value="T_Tr_GTP-bd_dom"/>
</dbReference>
<dbReference type="InterPro" id="IPR000178">
    <property type="entry name" value="TF_IF2_bacterial-like"/>
</dbReference>
<dbReference type="InterPro" id="IPR015760">
    <property type="entry name" value="TIF_IF2"/>
</dbReference>
<dbReference type="InterPro" id="IPR023115">
    <property type="entry name" value="TIF_IF2_dom3"/>
</dbReference>
<dbReference type="InterPro" id="IPR036925">
    <property type="entry name" value="TIF_IF2_dom3_sf"/>
</dbReference>
<dbReference type="InterPro" id="IPR009000">
    <property type="entry name" value="Transl_B-barrel_sf"/>
</dbReference>
<dbReference type="NCBIfam" id="TIGR00487">
    <property type="entry name" value="IF-2"/>
    <property type="match status" value="1"/>
</dbReference>
<dbReference type="NCBIfam" id="TIGR00231">
    <property type="entry name" value="small_GTP"/>
    <property type="match status" value="1"/>
</dbReference>
<dbReference type="PANTHER" id="PTHR43381:SF5">
    <property type="entry name" value="TR-TYPE G DOMAIN-CONTAINING PROTEIN"/>
    <property type="match status" value="1"/>
</dbReference>
<dbReference type="PANTHER" id="PTHR43381">
    <property type="entry name" value="TRANSLATION INITIATION FACTOR IF-2-RELATED"/>
    <property type="match status" value="1"/>
</dbReference>
<dbReference type="Pfam" id="PF22042">
    <property type="entry name" value="EF-G_D2"/>
    <property type="match status" value="1"/>
</dbReference>
<dbReference type="Pfam" id="PF00009">
    <property type="entry name" value="GTP_EFTU"/>
    <property type="match status" value="1"/>
</dbReference>
<dbReference type="Pfam" id="PF03144">
    <property type="entry name" value="GTP_EFTU_D2"/>
    <property type="match status" value="1"/>
</dbReference>
<dbReference type="Pfam" id="PF11987">
    <property type="entry name" value="IF-2"/>
    <property type="match status" value="1"/>
</dbReference>
<dbReference type="Pfam" id="PF08364">
    <property type="entry name" value="IF2_assoc"/>
    <property type="match status" value="1"/>
</dbReference>
<dbReference type="Pfam" id="PF04760">
    <property type="entry name" value="IF2_N"/>
    <property type="match status" value="1"/>
</dbReference>
<dbReference type="SUPFAM" id="SSF52156">
    <property type="entry name" value="Initiation factor IF2/eIF5b, domain 3"/>
    <property type="match status" value="1"/>
</dbReference>
<dbReference type="SUPFAM" id="SSF52540">
    <property type="entry name" value="P-loop containing nucleoside triphosphate hydrolases"/>
    <property type="match status" value="1"/>
</dbReference>
<dbReference type="SUPFAM" id="SSF46955">
    <property type="entry name" value="Putative DNA-binding domain"/>
    <property type="match status" value="1"/>
</dbReference>
<dbReference type="SUPFAM" id="SSF50447">
    <property type="entry name" value="Translation proteins"/>
    <property type="match status" value="2"/>
</dbReference>
<dbReference type="PROSITE" id="PS51722">
    <property type="entry name" value="G_TR_2"/>
    <property type="match status" value="1"/>
</dbReference>
<dbReference type="PROSITE" id="PS01176">
    <property type="entry name" value="IF2"/>
    <property type="match status" value="1"/>
</dbReference>
<proteinExistence type="inferred from homology"/>
<gene>
    <name evidence="2" type="primary">infB</name>
    <name type="ordered locus">XAC2687</name>
</gene>
<organism>
    <name type="scientific">Xanthomonas axonopodis pv. citri (strain 306)</name>
    <dbReference type="NCBI Taxonomy" id="190486"/>
    <lineage>
        <taxon>Bacteria</taxon>
        <taxon>Pseudomonadati</taxon>
        <taxon>Pseudomonadota</taxon>
        <taxon>Gammaproteobacteria</taxon>
        <taxon>Lysobacterales</taxon>
        <taxon>Lysobacteraceae</taxon>
        <taxon>Xanthomonas</taxon>
    </lineage>
</organism>
<evidence type="ECO:0000250" key="1"/>
<evidence type="ECO:0000255" key="2">
    <source>
        <dbReference type="HAMAP-Rule" id="MF_00100"/>
    </source>
</evidence>
<evidence type="ECO:0000256" key="3">
    <source>
        <dbReference type="SAM" id="MobiDB-lite"/>
    </source>
</evidence>
<name>IF2_XANAC</name>
<reference key="1">
    <citation type="journal article" date="2002" name="Nature">
        <title>Comparison of the genomes of two Xanthomonas pathogens with differing host specificities.</title>
        <authorList>
            <person name="da Silva A.C.R."/>
            <person name="Ferro J.A."/>
            <person name="Reinach F.C."/>
            <person name="Farah C.S."/>
            <person name="Furlan L.R."/>
            <person name="Quaggio R.B."/>
            <person name="Monteiro-Vitorello C.B."/>
            <person name="Van Sluys M.A."/>
            <person name="Almeida N.F. Jr."/>
            <person name="Alves L.M.C."/>
            <person name="do Amaral A.M."/>
            <person name="Bertolini M.C."/>
            <person name="Camargo L.E.A."/>
            <person name="Camarotte G."/>
            <person name="Cannavan F."/>
            <person name="Cardozo J."/>
            <person name="Chambergo F."/>
            <person name="Ciapina L.P."/>
            <person name="Cicarelli R.M.B."/>
            <person name="Coutinho L.L."/>
            <person name="Cursino-Santos J.R."/>
            <person name="El-Dorry H."/>
            <person name="Faria J.B."/>
            <person name="Ferreira A.J.S."/>
            <person name="Ferreira R.C.C."/>
            <person name="Ferro M.I.T."/>
            <person name="Formighieri E.F."/>
            <person name="Franco M.C."/>
            <person name="Greggio C.C."/>
            <person name="Gruber A."/>
            <person name="Katsuyama A.M."/>
            <person name="Kishi L.T."/>
            <person name="Leite R.P."/>
            <person name="Lemos E.G.M."/>
            <person name="Lemos M.V.F."/>
            <person name="Locali E.C."/>
            <person name="Machado M.A."/>
            <person name="Madeira A.M.B.N."/>
            <person name="Martinez-Rossi N.M."/>
            <person name="Martins E.C."/>
            <person name="Meidanis J."/>
            <person name="Menck C.F.M."/>
            <person name="Miyaki C.Y."/>
            <person name="Moon D.H."/>
            <person name="Moreira L.M."/>
            <person name="Novo M.T.M."/>
            <person name="Okura V.K."/>
            <person name="Oliveira M.C."/>
            <person name="Oliveira V.R."/>
            <person name="Pereira H.A."/>
            <person name="Rossi A."/>
            <person name="Sena J.A.D."/>
            <person name="Silva C."/>
            <person name="de Souza R.F."/>
            <person name="Spinola L.A.F."/>
            <person name="Takita M.A."/>
            <person name="Tamura R.E."/>
            <person name="Teixeira E.C."/>
            <person name="Tezza R.I.D."/>
            <person name="Trindade dos Santos M."/>
            <person name="Truffi D."/>
            <person name="Tsai S.M."/>
            <person name="White F.F."/>
            <person name="Setubal J.C."/>
            <person name="Kitajima J.P."/>
        </authorList>
    </citation>
    <scope>NUCLEOTIDE SEQUENCE [LARGE SCALE GENOMIC DNA]</scope>
    <source>
        <strain>306</strain>
    </source>
</reference>
<keyword id="KW-0963">Cytoplasm</keyword>
<keyword id="KW-0342">GTP-binding</keyword>
<keyword id="KW-0396">Initiation factor</keyword>
<keyword id="KW-0547">Nucleotide-binding</keyword>
<keyword id="KW-0648">Protein biosynthesis</keyword>
<sequence>MSQQTTIRKLAELVNTPVDKLLVQLAEAGMKFSGPDQVVTSTEKMKLLGFLRRTHGKAETSAEAASEAAKKITLNRRKLQEVTVNAGRTKTTVNVEVRQKRTYVKSENEGGGRAAPMTPDEERADILRKLEESRQRNLEEQQRLAESDRVRDEAIQRKREEEQAAKDRAEAERKAAEEAAAAASAPAPVADAPKPSAAAPAARLPSSPSSAPRAARPAGASPASRPAAPARADDRSNAAKHKTRGSHVMVAGVEDDDATKRFAGQLHLSAADRARRSNVRGKPTGRPGSSSSRRGNDSGRGGSQANSGPHGFERPTAPVVREVAIGETITVADLAQKLALKGGDVVKALFKMGVMATITQSIDHDTAALVTEELGHKAVRADNADFEDALLAHAEDAQGEATSRPPVVTIMGHVDHGKTSLLDYIRRTKIASGEAGGITQHIGAYHVETGRGVISFLDTPGHAAFTSMRARGAKITDIVVLVVAADDGVMPQTKEAVAHAKAAGVPLIVAVNKIDKTGADPLRVKNELLAENVVAEEFGGDTQFIEVSAKLGTGVDTLLDAISLQAEVLELKAVAEGRASGTVIESSLDKGRGPVATVLVQQGALKRGDYLVCGIQYGRVRALFDETGHQPASAGPSIPVQVLGLSGVPEAGDDFVVVDDERLAKDVAQQRETKRRESRLVASATNRMEDILAQMGKGEGQQVLNLVIKADVQGSVEALKQSLVALSNEDIRINVIHSGVGGITESDANSAAASKATIIGFNVRADASARKIVESNGIDLRYFSIIYDVIDQVKQVASGLLGVEIREEIIGIAQVRDVFRSSKFGAVAGCMVIEGVVKRSKPIRVLRDSVVVFEGELESLRRFKENVDEVRNGTECGIGVKAYNDVKAGDQIECFERIEVARTL</sequence>
<protein>
    <recommendedName>
        <fullName evidence="2">Translation initiation factor IF-2</fullName>
    </recommendedName>
</protein>
<feature type="chain" id="PRO_0000137285" description="Translation initiation factor IF-2">
    <location>
        <begin position="1"/>
        <end position="904"/>
    </location>
</feature>
<feature type="domain" description="tr-type G">
    <location>
        <begin position="403"/>
        <end position="572"/>
    </location>
</feature>
<feature type="region of interest" description="Disordered" evidence="3">
    <location>
        <begin position="102"/>
        <end position="122"/>
    </location>
</feature>
<feature type="region of interest" description="Disordered" evidence="3">
    <location>
        <begin position="134"/>
        <end position="252"/>
    </location>
</feature>
<feature type="region of interest" description="Disordered" evidence="3">
    <location>
        <begin position="267"/>
        <end position="316"/>
    </location>
</feature>
<feature type="region of interest" description="G1" evidence="1">
    <location>
        <begin position="412"/>
        <end position="419"/>
    </location>
</feature>
<feature type="region of interest" description="G2" evidence="1">
    <location>
        <begin position="437"/>
        <end position="441"/>
    </location>
</feature>
<feature type="region of interest" description="G3" evidence="1">
    <location>
        <begin position="458"/>
        <end position="461"/>
    </location>
</feature>
<feature type="region of interest" description="G4" evidence="1">
    <location>
        <begin position="512"/>
        <end position="515"/>
    </location>
</feature>
<feature type="region of interest" description="G5" evidence="1">
    <location>
        <begin position="548"/>
        <end position="550"/>
    </location>
</feature>
<feature type="compositionally biased region" description="Basic and acidic residues" evidence="3">
    <location>
        <begin position="134"/>
        <end position="177"/>
    </location>
</feature>
<feature type="compositionally biased region" description="Low complexity" evidence="3">
    <location>
        <begin position="178"/>
        <end position="230"/>
    </location>
</feature>
<feature type="binding site" evidence="2">
    <location>
        <begin position="412"/>
        <end position="419"/>
    </location>
    <ligand>
        <name>GTP</name>
        <dbReference type="ChEBI" id="CHEBI:37565"/>
    </ligand>
</feature>
<feature type="binding site" evidence="2">
    <location>
        <begin position="458"/>
        <end position="462"/>
    </location>
    <ligand>
        <name>GTP</name>
        <dbReference type="ChEBI" id="CHEBI:37565"/>
    </ligand>
</feature>
<feature type="binding site" evidence="2">
    <location>
        <begin position="512"/>
        <end position="515"/>
    </location>
    <ligand>
        <name>GTP</name>
        <dbReference type="ChEBI" id="CHEBI:37565"/>
    </ligand>
</feature>
<accession>Q8PJ55</accession>
<comment type="function">
    <text evidence="2">One of the essential components for the initiation of protein synthesis. Protects formylmethionyl-tRNA from spontaneous hydrolysis and promotes its binding to the 30S ribosomal subunits. Also involved in the hydrolysis of GTP during the formation of the 70S ribosomal complex.</text>
</comment>
<comment type="subcellular location">
    <subcellularLocation>
        <location evidence="2">Cytoplasm</location>
    </subcellularLocation>
</comment>
<comment type="similarity">
    <text evidence="2">Belongs to the TRAFAC class translation factor GTPase superfamily. Classic translation factor GTPase family. IF-2 subfamily.</text>
</comment>